<sequence>MGKQPLAKKAEMVDEVRSLLQASQMVLVIDYRGLTVSEMNQLRAELRKADAVCMVVKNTLMRRAVADQKAWAGILPFLSGPTAFIMIRGDIPAALKAYQDFAKQTKKTEFRGAAAEGLSLTLDQAKAIAELPPKEVLMAQVAGSLKSVATRLAVGLNAVPTQVARGIQEIPASLARAIRAIADKEAA</sequence>
<feature type="chain" id="PRO_0000234899" description="Large ribosomal subunit protein uL10">
    <location>
        <begin position="1"/>
        <end position="187"/>
    </location>
</feature>
<evidence type="ECO:0000255" key="1">
    <source>
        <dbReference type="HAMAP-Rule" id="MF_00362"/>
    </source>
</evidence>
<evidence type="ECO:0000305" key="2"/>
<name>RL10_SYNJA</name>
<comment type="function">
    <text evidence="1">Forms part of the ribosomal stalk, playing a central role in the interaction of the ribosome with GTP-bound translation factors.</text>
</comment>
<comment type="subunit">
    <text evidence="1">Part of the ribosomal stalk of the 50S ribosomal subunit. The N-terminus interacts with L11 and the large rRNA to form the base of the stalk. The C-terminus forms an elongated spine to which L12 dimers bind in a sequential fashion forming a multimeric L10(L12)X complex.</text>
</comment>
<comment type="similarity">
    <text evidence="1">Belongs to the universal ribosomal protein uL10 family.</text>
</comment>
<accession>Q2JTQ3</accession>
<reference key="1">
    <citation type="journal article" date="2007" name="ISME J.">
        <title>Population level functional diversity in a microbial community revealed by comparative genomic and metagenomic analyses.</title>
        <authorList>
            <person name="Bhaya D."/>
            <person name="Grossman A.R."/>
            <person name="Steunou A.-S."/>
            <person name="Khuri N."/>
            <person name="Cohan F.M."/>
            <person name="Hamamura N."/>
            <person name="Melendrez M.C."/>
            <person name="Bateson M.M."/>
            <person name="Ward D.M."/>
            <person name="Heidelberg J.F."/>
        </authorList>
    </citation>
    <scope>NUCLEOTIDE SEQUENCE [LARGE SCALE GENOMIC DNA]</scope>
    <source>
        <strain>JA-3-3Ab</strain>
    </source>
</reference>
<keyword id="KW-0687">Ribonucleoprotein</keyword>
<keyword id="KW-0689">Ribosomal protein</keyword>
<keyword id="KW-0694">RNA-binding</keyword>
<keyword id="KW-0699">rRNA-binding</keyword>
<proteinExistence type="inferred from homology"/>
<protein>
    <recommendedName>
        <fullName evidence="1">Large ribosomal subunit protein uL10</fullName>
    </recommendedName>
    <alternativeName>
        <fullName evidence="2">50S ribosomal protein L10</fullName>
    </alternativeName>
</protein>
<dbReference type="EMBL" id="CP000239">
    <property type="protein sequence ID" value="ABC99936.1"/>
    <property type="molecule type" value="Genomic_DNA"/>
</dbReference>
<dbReference type="RefSeq" id="WP_011430612.1">
    <property type="nucleotide sequence ID" value="NC_007775.1"/>
</dbReference>
<dbReference type="SMR" id="Q2JTQ3"/>
<dbReference type="STRING" id="321327.CYA_1782"/>
<dbReference type="KEGG" id="cya:CYA_1782"/>
<dbReference type="eggNOG" id="COG0244">
    <property type="taxonomic scope" value="Bacteria"/>
</dbReference>
<dbReference type="HOGENOM" id="CLU_092227_1_1_3"/>
<dbReference type="OrthoDB" id="9808307at2"/>
<dbReference type="Proteomes" id="UP000008818">
    <property type="component" value="Chromosome"/>
</dbReference>
<dbReference type="GO" id="GO:0015934">
    <property type="term" value="C:large ribosomal subunit"/>
    <property type="evidence" value="ECO:0007669"/>
    <property type="project" value="InterPro"/>
</dbReference>
<dbReference type="GO" id="GO:0070180">
    <property type="term" value="F:large ribosomal subunit rRNA binding"/>
    <property type="evidence" value="ECO:0007669"/>
    <property type="project" value="UniProtKB-UniRule"/>
</dbReference>
<dbReference type="GO" id="GO:0003735">
    <property type="term" value="F:structural constituent of ribosome"/>
    <property type="evidence" value="ECO:0007669"/>
    <property type="project" value="InterPro"/>
</dbReference>
<dbReference type="GO" id="GO:0006412">
    <property type="term" value="P:translation"/>
    <property type="evidence" value="ECO:0007669"/>
    <property type="project" value="UniProtKB-UniRule"/>
</dbReference>
<dbReference type="CDD" id="cd05797">
    <property type="entry name" value="Ribosomal_L10"/>
    <property type="match status" value="1"/>
</dbReference>
<dbReference type="Gene3D" id="3.30.70.1730">
    <property type="match status" value="1"/>
</dbReference>
<dbReference type="Gene3D" id="6.10.250.290">
    <property type="match status" value="1"/>
</dbReference>
<dbReference type="HAMAP" id="MF_00362">
    <property type="entry name" value="Ribosomal_uL10"/>
    <property type="match status" value="1"/>
</dbReference>
<dbReference type="InterPro" id="IPR001790">
    <property type="entry name" value="Ribosomal_uL10"/>
</dbReference>
<dbReference type="InterPro" id="IPR043141">
    <property type="entry name" value="Ribosomal_uL10-like_sf"/>
</dbReference>
<dbReference type="InterPro" id="IPR022973">
    <property type="entry name" value="Ribosomal_uL10_bac"/>
</dbReference>
<dbReference type="InterPro" id="IPR047865">
    <property type="entry name" value="Ribosomal_uL10_bac_type"/>
</dbReference>
<dbReference type="InterPro" id="IPR002363">
    <property type="entry name" value="Ribosomal_uL10_CS_bac"/>
</dbReference>
<dbReference type="NCBIfam" id="NF000955">
    <property type="entry name" value="PRK00099.1-1"/>
    <property type="match status" value="1"/>
</dbReference>
<dbReference type="PANTHER" id="PTHR11560">
    <property type="entry name" value="39S RIBOSOMAL PROTEIN L10, MITOCHONDRIAL"/>
    <property type="match status" value="1"/>
</dbReference>
<dbReference type="Pfam" id="PF00466">
    <property type="entry name" value="Ribosomal_L10"/>
    <property type="match status" value="1"/>
</dbReference>
<dbReference type="SUPFAM" id="SSF160369">
    <property type="entry name" value="Ribosomal protein L10-like"/>
    <property type="match status" value="1"/>
</dbReference>
<dbReference type="PROSITE" id="PS01109">
    <property type="entry name" value="RIBOSOMAL_L10"/>
    <property type="match status" value="1"/>
</dbReference>
<gene>
    <name evidence="1" type="primary">rplJ</name>
    <name evidence="1" type="synonym">rpl10</name>
    <name type="ordered locus">CYA_1782</name>
</gene>
<organism>
    <name type="scientific">Synechococcus sp. (strain JA-3-3Ab)</name>
    <name type="common">Cyanobacteria bacterium Yellowstone A-Prime</name>
    <dbReference type="NCBI Taxonomy" id="321327"/>
    <lineage>
        <taxon>Bacteria</taxon>
        <taxon>Bacillati</taxon>
        <taxon>Cyanobacteriota</taxon>
        <taxon>Cyanophyceae</taxon>
        <taxon>Synechococcales</taxon>
        <taxon>Synechococcaceae</taxon>
        <taxon>Synechococcus</taxon>
    </lineage>
</organism>